<reference key="1">
    <citation type="journal article" date="2000" name="Syst. Biol.">
        <title>c-myc gene sequences and the phylogeny of bats and other eutherian mammals.</title>
        <authorList>
            <person name="Miyamoto M.M."/>
            <person name="Porter C.A."/>
            <person name="Goodman M."/>
        </authorList>
    </citation>
    <scope>NUCLEOTIDE SEQUENCE [GENOMIC DNA]</scope>
</reference>
<protein>
    <recommendedName>
        <fullName>Myc proto-oncogene protein</fullName>
    </recommendedName>
    <alternativeName>
        <fullName>Proto-oncogene c-Myc</fullName>
    </alternativeName>
    <alternativeName>
        <fullName>Transcription factor p64</fullName>
    </alternativeName>
</protein>
<name>MYC_TUPGL</name>
<feature type="chain" id="PRO_0000127304" description="Myc proto-oncogene protein">
    <location>
        <begin position="1"/>
        <end position="439"/>
    </location>
</feature>
<feature type="domain" description="bHLH" evidence="4">
    <location>
        <begin position="354"/>
        <end position="406"/>
    </location>
</feature>
<feature type="region of interest" description="Disordered" evidence="5">
    <location>
        <begin position="203"/>
        <end position="359"/>
    </location>
</feature>
<feature type="region of interest" description="Leucine-zipper">
    <location>
        <begin position="413"/>
        <end position="434"/>
    </location>
</feature>
<feature type="short sequence motif" description="9aaTAD" evidence="2">
    <location>
        <begin position="100"/>
        <end position="108"/>
    </location>
</feature>
<feature type="short sequence motif" description="UBR5-degron" evidence="2">
    <location>
        <begin position="355"/>
        <end position="364"/>
    </location>
</feature>
<feature type="compositionally biased region" description="Low complexity" evidence="5">
    <location>
        <begin position="210"/>
        <end position="237"/>
    </location>
</feature>
<feature type="compositionally biased region" description="Acidic residues" evidence="5">
    <location>
        <begin position="251"/>
        <end position="263"/>
    </location>
</feature>
<feature type="compositionally biased region" description="Basic and acidic residues" evidence="5">
    <location>
        <begin position="266"/>
        <end position="278"/>
    </location>
</feature>
<feature type="compositionally biased region" description="Basic and acidic residues" evidence="5">
    <location>
        <begin position="315"/>
        <end position="331"/>
    </location>
</feature>
<feature type="compositionally biased region" description="Polar residues" evidence="5">
    <location>
        <begin position="335"/>
        <end position="347"/>
    </location>
</feature>
<feature type="modified residue" description="Phosphoserine" evidence="2">
    <location>
        <position position="6"/>
    </location>
</feature>
<feature type="modified residue" description="Phosphothreonine; by GSK3; alternate" evidence="2">
    <location>
        <position position="58"/>
    </location>
</feature>
<feature type="modified residue" description="Phosphoserine; by DYRK2, GSK3 and CDK2" evidence="2">
    <location>
        <position position="62"/>
    </location>
</feature>
<feature type="modified residue" description="Phosphoserine" evidence="2">
    <location>
        <position position="71"/>
    </location>
</feature>
<feature type="modified residue" description="Phosphoserine" evidence="2">
    <location>
        <position position="81"/>
    </location>
</feature>
<feature type="modified residue" description="N6-acetyllysine; by PCAF; alternate" evidence="2">
    <location>
        <position position="143"/>
    </location>
</feature>
<feature type="modified residue" description="N6-acetyllysine; alternate" evidence="2">
    <location>
        <position position="148"/>
    </location>
</feature>
<feature type="modified residue" description="Phosphoserine" evidence="2">
    <location>
        <position position="151"/>
    </location>
</feature>
<feature type="modified residue" description="N6-acetyllysine; by PCAF" evidence="2">
    <location>
        <position position="157"/>
    </location>
</feature>
<feature type="modified residue" description="Phosphoserine" evidence="2">
    <location>
        <position position="159"/>
    </location>
</feature>
<feature type="modified residue" description="Phosphoserine" evidence="2">
    <location>
        <position position="161"/>
    </location>
</feature>
<feature type="modified residue" description="N6-acetyllysine; by PCAF" evidence="2">
    <location>
        <position position="275"/>
    </location>
</feature>
<feature type="modified residue" description="Phosphoserine" evidence="2">
    <location>
        <position position="293"/>
    </location>
</feature>
<feature type="modified residue" description="Phosphoserine" evidence="2">
    <location>
        <position position="314"/>
    </location>
</feature>
<feature type="modified residue" description="Phosphothreonine" evidence="2">
    <location>
        <position position="315"/>
    </location>
</feature>
<feature type="modified residue" description="N6-acetyllysine; by PCAF" evidence="2">
    <location>
        <position position="317"/>
    </location>
</feature>
<feature type="modified residue" description="N6-acetyllysine; by PCAF" evidence="2">
    <location>
        <position position="323"/>
    </location>
</feature>
<feature type="modified residue" description="Phosphoserine; by PIM2; in vitro" evidence="3">
    <location>
        <position position="329"/>
    </location>
</feature>
<feature type="modified residue" description="Phosphoserine" evidence="2">
    <location>
        <position position="344"/>
    </location>
</feature>
<feature type="modified residue" description="Phosphoserine" evidence="2">
    <location>
        <position position="347"/>
    </location>
</feature>
<feature type="modified residue" description="Phosphoserine" evidence="2">
    <location>
        <position position="348"/>
    </location>
</feature>
<feature type="modified residue" description="N6-acetyllysine; by PCAF" evidence="2">
    <location>
        <position position="371"/>
    </location>
</feature>
<feature type="glycosylation site" description="O-linked (GlcNAc) threonine; alternate" evidence="1">
    <location>
        <position position="58"/>
    </location>
</feature>
<feature type="cross-link" description="Glycyl lysine isopeptide (Lys-Gly) (interchain with G-Cter in SUMO2)" evidence="2">
    <location>
        <position position="52"/>
    </location>
</feature>
<feature type="cross-link" description="Glycyl lysine isopeptide (Lys-Gly) (interchain with G-Cter in SUMO2); alternate" evidence="2">
    <location>
        <position position="143"/>
    </location>
</feature>
<feature type="cross-link" description="Glycyl lysine isopeptide (Lys-Gly) (interchain with G-Cter in SUMO2); alternate" evidence="2">
    <location>
        <position position="148"/>
    </location>
</feature>
<feature type="cross-link" description="Glycyl lysine isopeptide (Lys-Gly) (interchain with G-Cter in SUMO2)" evidence="2">
    <location>
        <position position="298"/>
    </location>
</feature>
<evidence type="ECO:0000250" key="1"/>
<evidence type="ECO:0000250" key="2">
    <source>
        <dbReference type="UniProtKB" id="P01106"/>
    </source>
</evidence>
<evidence type="ECO:0000250" key="3">
    <source>
        <dbReference type="UniProtKB" id="P01108"/>
    </source>
</evidence>
<evidence type="ECO:0000255" key="4">
    <source>
        <dbReference type="PROSITE-ProRule" id="PRU00981"/>
    </source>
</evidence>
<evidence type="ECO:0000256" key="5">
    <source>
        <dbReference type="SAM" id="MobiDB-lite"/>
    </source>
</evidence>
<dbReference type="EMBL" id="AF160485">
    <property type="protein sequence ID" value="AAF80394.1"/>
    <property type="molecule type" value="Genomic_DNA"/>
</dbReference>
<dbReference type="EMBL" id="AF160484">
    <property type="protein sequence ID" value="AAF80394.1"/>
    <property type="status" value="JOINED"/>
    <property type="molecule type" value="Genomic_DNA"/>
</dbReference>
<dbReference type="SMR" id="Q9MZT9"/>
<dbReference type="GlyCosmos" id="Q9MZT9">
    <property type="glycosylation" value="1 site, No reported glycans"/>
</dbReference>
<dbReference type="GO" id="GO:0005737">
    <property type="term" value="C:cytoplasm"/>
    <property type="evidence" value="ECO:0007669"/>
    <property type="project" value="UniProtKB-SubCell"/>
</dbReference>
<dbReference type="GO" id="GO:0005730">
    <property type="term" value="C:nucleolus"/>
    <property type="evidence" value="ECO:0000250"/>
    <property type="project" value="UniProtKB"/>
</dbReference>
<dbReference type="GO" id="GO:0005654">
    <property type="term" value="C:nucleoplasm"/>
    <property type="evidence" value="ECO:0000250"/>
    <property type="project" value="UniProtKB"/>
</dbReference>
<dbReference type="GO" id="GO:0005634">
    <property type="term" value="C:nucleus"/>
    <property type="evidence" value="ECO:0000250"/>
    <property type="project" value="UniProtKB"/>
</dbReference>
<dbReference type="GO" id="GO:0003677">
    <property type="term" value="F:DNA binding"/>
    <property type="evidence" value="ECO:0000250"/>
    <property type="project" value="UniProtKB"/>
</dbReference>
<dbReference type="GO" id="GO:0000981">
    <property type="term" value="F:DNA-binding transcription factor activity, RNA polymerase II-specific"/>
    <property type="evidence" value="ECO:0000250"/>
    <property type="project" value="UniProtKB"/>
</dbReference>
<dbReference type="GO" id="GO:0070888">
    <property type="term" value="F:E-box binding"/>
    <property type="evidence" value="ECO:0000250"/>
    <property type="project" value="UniProtKB"/>
</dbReference>
<dbReference type="GO" id="GO:0046983">
    <property type="term" value="F:protein dimerization activity"/>
    <property type="evidence" value="ECO:0007669"/>
    <property type="project" value="InterPro"/>
</dbReference>
<dbReference type="GO" id="GO:0044877">
    <property type="term" value="F:protein-containing complex binding"/>
    <property type="evidence" value="ECO:0000250"/>
    <property type="project" value="UniProtKB"/>
</dbReference>
<dbReference type="GO" id="GO:0006338">
    <property type="term" value="P:chromatin remodeling"/>
    <property type="evidence" value="ECO:0000250"/>
    <property type="project" value="UniProtKB"/>
</dbReference>
<dbReference type="GO" id="GO:0051276">
    <property type="term" value="P:chromosome organization"/>
    <property type="evidence" value="ECO:0000250"/>
    <property type="project" value="UniProtKB"/>
</dbReference>
<dbReference type="GO" id="GO:0006974">
    <property type="term" value="P:DNA damage response"/>
    <property type="evidence" value="ECO:0000250"/>
    <property type="project" value="UniProtKB"/>
</dbReference>
<dbReference type="GO" id="GO:0000082">
    <property type="term" value="P:G1/S transition of mitotic cell cycle"/>
    <property type="evidence" value="ECO:0000250"/>
    <property type="project" value="UniProtKB"/>
</dbReference>
<dbReference type="GO" id="GO:0006879">
    <property type="term" value="P:intracellular iron ion homeostasis"/>
    <property type="evidence" value="ECO:0000250"/>
    <property type="project" value="UniProtKB"/>
</dbReference>
<dbReference type="GO" id="GO:0000165">
    <property type="term" value="P:MAPK cascade"/>
    <property type="evidence" value="ECO:0000250"/>
    <property type="project" value="UniProtKB"/>
</dbReference>
<dbReference type="GO" id="GO:0043066">
    <property type="term" value="P:negative regulation of apoptotic process"/>
    <property type="evidence" value="ECO:0000250"/>
    <property type="project" value="UniProtKB"/>
</dbReference>
<dbReference type="GO" id="GO:0051782">
    <property type="term" value="P:negative regulation of cell division"/>
    <property type="evidence" value="ECO:0000250"/>
    <property type="project" value="UniProtKB"/>
</dbReference>
<dbReference type="GO" id="GO:0045656">
    <property type="term" value="P:negative regulation of monocyte differentiation"/>
    <property type="evidence" value="ECO:0000250"/>
    <property type="project" value="UniProtKB"/>
</dbReference>
<dbReference type="GO" id="GO:0032873">
    <property type="term" value="P:negative regulation of stress-activated MAPK cascade"/>
    <property type="evidence" value="ECO:0000250"/>
    <property type="project" value="UniProtKB"/>
</dbReference>
<dbReference type="GO" id="GO:0045893">
    <property type="term" value="P:positive regulation of DNA-templated transcription"/>
    <property type="evidence" value="ECO:0000250"/>
    <property type="project" value="UniProtKB"/>
</dbReference>
<dbReference type="GO" id="GO:0050679">
    <property type="term" value="P:positive regulation of epithelial cell proliferation"/>
    <property type="evidence" value="ECO:0000250"/>
    <property type="project" value="UniProtKB"/>
</dbReference>
<dbReference type="GO" id="GO:0048146">
    <property type="term" value="P:positive regulation of fibroblast proliferation"/>
    <property type="evidence" value="ECO:0000250"/>
    <property type="project" value="UniProtKB"/>
</dbReference>
<dbReference type="GO" id="GO:0045944">
    <property type="term" value="P:positive regulation of transcription by RNA polymerase II"/>
    <property type="evidence" value="ECO:0000250"/>
    <property type="project" value="UniProtKB"/>
</dbReference>
<dbReference type="GO" id="GO:0006355">
    <property type="term" value="P:regulation of DNA-templated transcription"/>
    <property type="evidence" value="ECO:0000250"/>
    <property type="project" value="UniProtKB"/>
</dbReference>
<dbReference type="GO" id="GO:1904672">
    <property type="term" value="P:regulation of somatic stem cell population maintenance"/>
    <property type="evidence" value="ECO:0000250"/>
    <property type="project" value="UniProtKB"/>
</dbReference>
<dbReference type="GO" id="GO:0032204">
    <property type="term" value="P:regulation of telomere maintenance"/>
    <property type="evidence" value="ECO:0000250"/>
    <property type="project" value="UniProtKB"/>
</dbReference>
<dbReference type="GO" id="GO:0009410">
    <property type="term" value="P:response to xenobiotic stimulus"/>
    <property type="evidence" value="ECO:0000250"/>
    <property type="project" value="UniProtKB"/>
</dbReference>
<dbReference type="GO" id="GO:0016072">
    <property type="term" value="P:rRNA metabolic process"/>
    <property type="evidence" value="ECO:0000250"/>
    <property type="project" value="UniProtKB"/>
</dbReference>
<dbReference type="CDD" id="cd11458">
    <property type="entry name" value="bHLHzip_c-Myc"/>
    <property type="match status" value="1"/>
</dbReference>
<dbReference type="FunFam" id="4.10.280.10:FF:000019">
    <property type="entry name" value="Myc proto-oncogene protein"/>
    <property type="match status" value="1"/>
</dbReference>
<dbReference type="Gene3D" id="4.10.280.10">
    <property type="entry name" value="Helix-loop-helix DNA-binding domain"/>
    <property type="match status" value="1"/>
</dbReference>
<dbReference type="InterPro" id="IPR011598">
    <property type="entry name" value="bHLH_dom"/>
</dbReference>
<dbReference type="InterPro" id="IPR036638">
    <property type="entry name" value="HLH_DNA-bd_sf"/>
</dbReference>
<dbReference type="InterPro" id="IPR003327">
    <property type="entry name" value="Myc-LZ"/>
</dbReference>
<dbReference type="InterPro" id="IPR050433">
    <property type="entry name" value="Myc_transcription_factors"/>
</dbReference>
<dbReference type="InterPro" id="IPR002418">
    <property type="entry name" value="Tscrpt_reg_Myc"/>
</dbReference>
<dbReference type="InterPro" id="IPR012682">
    <property type="entry name" value="Tscrpt_reg_Myc_N"/>
</dbReference>
<dbReference type="PANTHER" id="PTHR45851">
    <property type="entry name" value="MYC PROTO-ONCOGENE"/>
    <property type="match status" value="1"/>
</dbReference>
<dbReference type="Pfam" id="PF00010">
    <property type="entry name" value="HLH"/>
    <property type="match status" value="1"/>
</dbReference>
<dbReference type="Pfam" id="PF02344">
    <property type="entry name" value="Myc-LZ"/>
    <property type="match status" value="1"/>
</dbReference>
<dbReference type="Pfam" id="PF01056">
    <property type="entry name" value="Myc_N"/>
    <property type="match status" value="1"/>
</dbReference>
<dbReference type="PIRSF" id="PIRSF001705">
    <property type="entry name" value="Myc_protein"/>
    <property type="match status" value="1"/>
</dbReference>
<dbReference type="PRINTS" id="PR00044">
    <property type="entry name" value="LEUZIPPRMYC"/>
</dbReference>
<dbReference type="SMART" id="SM00353">
    <property type="entry name" value="HLH"/>
    <property type="match status" value="1"/>
</dbReference>
<dbReference type="SUPFAM" id="SSF47459">
    <property type="entry name" value="HLH, helix-loop-helix DNA-binding domain"/>
    <property type="match status" value="1"/>
</dbReference>
<dbReference type="PROSITE" id="PS50888">
    <property type="entry name" value="BHLH"/>
    <property type="match status" value="1"/>
</dbReference>
<sequence length="439" mass="48543">MPLNVSFASRNYDLDYDSVQPYFYCDEEENFYQQQQQSELQPPAPSEDIWKKFELLPTPPLSPSRRSGLCSPSYVAVASFSPRGDDDGGGGSFSTADQLEMVTELLGGDMVNQSFICDPDDETFIKNIIIQDCMWSGFSAAAKLVSEKLASYQAARKDSGSPSPARGHSGCSTSSLYLQDLSAAASECIDPSVVFPYPLNDGSSPKPCASPDSTAFSPSSDSLLSSTESSPRASPEPLALHEETPPTTSSDSEEDQEDEEEIDVVSVEKRQPPTKRSESGSPSAGGHSKPPHSPLVLKRCHVSTHQHNYAAPPSTRKDYPAAKRAKLDSGRVLKQISNNRKCASPRSSDTEENDKRRTHNVLERQRRNELKRSFFALRDQIPELENNEKAPKVVILKKATAYILSVQAEEQKLISEKDLLRKRREQLKHKLEQLRNSCA</sequence>
<keyword id="KW-0007">Acetylation</keyword>
<keyword id="KW-0010">Activator</keyword>
<keyword id="KW-0158">Chromosome</keyword>
<keyword id="KW-0963">Cytoplasm</keyword>
<keyword id="KW-0238">DNA-binding</keyword>
<keyword id="KW-0325">Glycoprotein</keyword>
<keyword id="KW-1017">Isopeptide bond</keyword>
<keyword id="KW-0539">Nucleus</keyword>
<keyword id="KW-0597">Phosphoprotein</keyword>
<keyword id="KW-0656">Proto-oncogene</keyword>
<keyword id="KW-0804">Transcription</keyword>
<keyword id="KW-0805">Transcription regulation</keyword>
<keyword id="KW-0832">Ubl conjugation</keyword>
<gene>
    <name type="primary">MYC</name>
</gene>
<proteinExistence type="inferred from homology"/>
<comment type="function">
    <text evidence="2 3">Transcription factor that binds DNA in a non-specific manner, yet also specifically recognizes the core sequence 5'-CAC[GA]TG-3'. Activates the transcription of growth-related genes. Binds to the VEGFA promoter, promoting VEGFA production and subsequent sprouting angiogenesis. Regulator of somatic reprogramming, controls self-renewal of embryonic stem cells. Functions with TAF6L to activate target gene expression through RNA polymerase II pause release (By similarity). Positively regulates transcription of HNRNPA1, HNRNPA2 and PTBP1 which in turn regulate splicing of pyruvate kinase PKM by binding repressively to sequences flanking PKM exon 9, inhibiting exon 9 inclusion and resulting in exon 10 inclusion and production of the PKM M2 isoform (By similarity).</text>
</comment>
<comment type="subunit">
    <text evidence="2 3">Efficient DNA binding requires dimerization with another bHLH protein. Binds DNA as a heterodimer with MAX (By similarity). Interacts with TAF1C and SPAG9. Interacts with PARP10. Interacts with KDM5A and KDM5B. Interacts (when phosphorylated at Thr-58 and Ser-62) with FBXW7. Interacts with PIM2. Interacts with RIOX1. The heterodimer MYC:MAX interacts with ABI1; the interaction may enhance MYC:MAX transcriptional activity. Interacts with TRIM6 (By similarity). Interacts with NPM1; the binary complex is recruited to the promoter of MYC target genes and enhances their transcription (By similarity). Interacts with CIP2A; leading to the stabilization of MYC (By similarity). Interacts with NUP205 (By similarity). Interacts with HEATR1; the interaction is required for localization of MYC to the nucleolus (By similarity).</text>
</comment>
<comment type="subcellular location">
    <subcellularLocation>
        <location evidence="2">Nucleus</location>
        <location evidence="2">Nucleoplasm</location>
    </subcellularLocation>
    <subcellularLocation>
        <location evidence="2">Nucleus</location>
        <location evidence="2">Nucleolus</location>
    </subcellularLocation>
    <subcellularLocation>
        <location evidence="2">Nucleus</location>
    </subcellularLocation>
    <subcellularLocation>
        <location evidence="2">Cytoplasm</location>
    </subcellularLocation>
    <subcellularLocation>
        <location evidence="2">Chromosome</location>
    </subcellularLocation>
    <text evidence="2">Association with chromatin is reduced by hyperphosphorylation. Localization to the nucleolus is dependent on HEATR1.</text>
</comment>
<comment type="domain">
    <text evidence="2">The 9aaTAD motif is a transactivation domain present in a large number of yeast and animal transcription factors.</text>
</comment>
<comment type="PTM">
    <text evidence="2 3">Phosphorylated by PRKDC (By similarity). Phosphorylation at Ser-329 by PIM2 leads to the stabilization of MYC (By similarity). Phosphorylation at Ser-62 by CDK2 prevents Ras-induced senescence. Phosphorylated at Ser-62 by DYRK2; this primes the protein for subsequent phosphorylation by GSK3B at Thr-58. Phosphorylation at Thr-58 and Ser-62 by GSK3 is required for ubiquitination and degradation by the proteasome. Dephosphorylation at multiple sites by the PNUTS-PP1 complex promotes MYC stability by preventing ubiquitination by the SCF(FBXW7) complex. Dephosphorylation at Ser-62 by protein phosphatase 2A (PPP2CA) promotes its degradation; interaction with PPP2CA is enhanced by AMBRA1 (By similarity).</text>
</comment>
<comment type="PTM">
    <text evidence="2 3">Ubiquitinated by the SCF(FBXW7) complex when phosphorylated at Thr-58 and Ser-62, leading to its degradation by the proteasome. Ubiquitination is counteracted by USP28 in the nucleoplasm and USP36 in the nucleolus, both interacting with of FBXW7, leading to its deubiquitination and preventing degradation. Also polyubiquitinated by the DCX(TRPC4AP) complex. Ubiquitinated by UBR5 when not forming a heterodimer with another bHLH protein, leading to its degradation: UBR5 recognizes and binds a degron that is only available upon heterodimer dissociation (By similarity). Ubiquitinated by TRIM6 in a phosphorylation-independent manner.</text>
</comment>
<accession>Q9MZT9</accession>
<organism>
    <name type="scientific">Tupaia glis</name>
    <name type="common">Common tree shrew</name>
    <name type="synonym">Sorex glis</name>
    <dbReference type="NCBI Taxonomy" id="9395"/>
    <lineage>
        <taxon>Eukaryota</taxon>
        <taxon>Metazoa</taxon>
        <taxon>Chordata</taxon>
        <taxon>Craniata</taxon>
        <taxon>Vertebrata</taxon>
        <taxon>Euteleostomi</taxon>
        <taxon>Mammalia</taxon>
        <taxon>Eutheria</taxon>
        <taxon>Euarchontoglires</taxon>
        <taxon>Scandentia</taxon>
        <taxon>Tupaiidae</taxon>
        <taxon>Tupaia</taxon>
    </lineage>
</organism>